<organismHost>
    <name type="scientific">Acanthamoeba polyphaga</name>
    <name type="common">Amoeba</name>
    <dbReference type="NCBI Taxonomy" id="5757"/>
</organismHost>
<evidence type="ECO:0000255" key="1"/>
<evidence type="ECO:0000256" key="2">
    <source>
        <dbReference type="SAM" id="MobiDB-lite"/>
    </source>
</evidence>
<evidence type="ECO:0000305" key="3"/>
<dbReference type="EMBL" id="AY653733">
    <property type="protein sequence ID" value="AAV50740.1"/>
    <property type="molecule type" value="Genomic_DNA"/>
</dbReference>
<dbReference type="SMR" id="Q5UQE2"/>
<dbReference type="KEGG" id="vg:9925099"/>
<dbReference type="OrthoDB" id="36989at10239"/>
<dbReference type="Proteomes" id="UP000001134">
    <property type="component" value="Genome"/>
</dbReference>
<dbReference type="GO" id="GO:0016020">
    <property type="term" value="C:membrane"/>
    <property type="evidence" value="ECO:0007669"/>
    <property type="project" value="UniProtKB-SubCell"/>
</dbReference>
<comment type="subcellular location">
    <subcellularLocation>
        <location evidence="3">Membrane</location>
        <topology evidence="3">Single-pass membrane protein</topology>
    </subcellularLocation>
</comment>
<protein>
    <recommendedName>
        <fullName>Uncharacterized protein R474</fullName>
    </recommendedName>
</protein>
<name>YR474_MIMIV</name>
<organism>
    <name type="scientific">Acanthamoeba polyphaga mimivirus</name>
    <name type="common">APMV</name>
    <dbReference type="NCBI Taxonomy" id="212035"/>
    <lineage>
        <taxon>Viruses</taxon>
        <taxon>Varidnaviria</taxon>
        <taxon>Bamfordvirae</taxon>
        <taxon>Nucleocytoviricota</taxon>
        <taxon>Megaviricetes</taxon>
        <taxon>Imitervirales</taxon>
        <taxon>Mimiviridae</taxon>
        <taxon>Megamimivirinae</taxon>
        <taxon>Mimivirus</taxon>
        <taxon>Mimivirus bradfordmassiliense</taxon>
    </lineage>
</organism>
<feature type="chain" id="PRO_0000253455" description="Uncharacterized protein R474">
    <location>
        <begin position="1"/>
        <end position="413"/>
    </location>
</feature>
<feature type="transmembrane region" description="Helical" evidence="1">
    <location>
        <begin position="14"/>
        <end position="34"/>
    </location>
</feature>
<feature type="region of interest" description="Disordered" evidence="2">
    <location>
        <begin position="250"/>
        <end position="277"/>
    </location>
</feature>
<feature type="compositionally biased region" description="Low complexity" evidence="2">
    <location>
        <begin position="250"/>
        <end position="263"/>
    </location>
</feature>
<feature type="compositionally biased region" description="Polar residues" evidence="2">
    <location>
        <begin position="264"/>
        <end position="277"/>
    </location>
</feature>
<feature type="glycosylation site" description="N-linked (GlcNAc...) asparagine; by host" evidence="1">
    <location>
        <position position="46"/>
    </location>
</feature>
<feature type="glycosylation site" description="N-linked (GlcNAc...) asparagine; by host" evidence="1">
    <location>
        <position position="55"/>
    </location>
</feature>
<feature type="glycosylation site" description="N-linked (GlcNAc...) asparagine; by host" evidence="1">
    <location>
        <position position="103"/>
    </location>
</feature>
<feature type="glycosylation site" description="N-linked (GlcNAc...) asparagine; by host" evidence="1">
    <location>
        <position position="171"/>
    </location>
</feature>
<feature type="glycosylation site" description="N-linked (GlcNAc...) asparagine; by host" evidence="1">
    <location>
        <position position="179"/>
    </location>
</feature>
<feature type="glycosylation site" description="N-linked (GlcNAc...) asparagine; by host" evidence="1">
    <location>
        <position position="184"/>
    </location>
</feature>
<feature type="glycosylation site" description="N-linked (GlcNAc...) asparagine; by host" evidence="1">
    <location>
        <position position="220"/>
    </location>
</feature>
<feature type="glycosylation site" description="N-linked (GlcNAc...) asparagine; by host" evidence="1">
    <location>
        <position position="252"/>
    </location>
</feature>
<feature type="glycosylation site" description="N-linked (GlcNAc...) asparagine; by host" evidence="1">
    <location>
        <position position="260"/>
    </location>
</feature>
<feature type="glycosylation site" description="N-linked (GlcNAc...) asparagine; by host" evidence="1">
    <location>
        <position position="273"/>
    </location>
</feature>
<feature type="glycosylation site" description="N-linked (GlcNAc...) asparagine; by host" evidence="1">
    <location>
        <position position="362"/>
    </location>
</feature>
<feature type="glycosylation site" description="N-linked (GlcNAc...) asparagine; by host" evidence="1">
    <location>
        <position position="366"/>
    </location>
</feature>
<feature type="glycosylation site" description="N-linked (GlcNAc...) asparagine; by host" evidence="1">
    <location>
        <position position="374"/>
    </location>
</feature>
<feature type="glycosylation site" description="N-linked (GlcNAc...) asparagine; by host" evidence="1">
    <location>
        <position position="378"/>
    </location>
</feature>
<feature type="glycosylation site" description="N-linked (GlcNAc...) asparagine; by host" evidence="1">
    <location>
        <position position="393"/>
    </location>
</feature>
<feature type="glycosylation site" description="N-linked (GlcNAc...) asparagine; by host" evidence="1">
    <location>
        <position position="408"/>
    </location>
</feature>
<accession>Q5UQE2</accession>
<keyword id="KW-0325">Glycoprotein</keyword>
<keyword id="KW-0472">Membrane</keyword>
<keyword id="KW-1185">Reference proteome</keyword>
<keyword id="KW-0812">Transmembrane</keyword>
<keyword id="KW-1133">Transmembrane helix</keyword>
<proteinExistence type="predicted"/>
<gene>
    <name type="ordered locus">MIMI_R474</name>
</gene>
<reference key="1">
    <citation type="journal article" date="2004" name="Science">
        <title>The 1.2-megabase genome sequence of Mimivirus.</title>
        <authorList>
            <person name="Raoult D."/>
            <person name="Audic S."/>
            <person name="Robert C."/>
            <person name="Abergel C."/>
            <person name="Renesto P."/>
            <person name="Ogata H."/>
            <person name="La Scola B."/>
            <person name="Susan M."/>
            <person name="Claverie J.-M."/>
        </authorList>
    </citation>
    <scope>NUCLEOTIDE SEQUENCE [LARGE SCALE GENOMIC DNA]</scope>
    <source>
        <strain>Rowbotham-Bradford</strain>
    </source>
</reference>
<sequence length="413" mass="47189">MNISIESQLINYCLLFFTVVIIPIFYYIYKIVYLYLSHKLRESLINTSARIFKENESFVKQIIFTITDGVGNLRQDIMDHLQYRQTCNSIKYIVDKVFVLIDNISAIYSNTPVENYNYQYCDNITPVQPLGCGAYCPYYQPYDATFNPDCNLNYDTIYNFDFDKDIIKCDNTSECSETNETNKNTSHKLKFEYPKRCRKSRRNSRVFSRNFLKTKKSRENNSKTSTTEPFACTKDETTGMYTIKSNAYDTKNSTETNSDNNSEIVSETNSETNYSTPTTAKVNIDDVLAAMTTVYDKSDFGLNDKIKENVADSLKKMCDSSGNIKVDFDDQKLFKTVFDSVYQGLMTDPSIVDNSGYSSPTNESLNGSLTETLNESLNGSFDNSINNIKETLNKSLMDFIDCPSGSINFSNKN</sequence>